<organism>
    <name type="scientific">Enterobacter sp. (strain 638)</name>
    <dbReference type="NCBI Taxonomy" id="399742"/>
    <lineage>
        <taxon>Bacteria</taxon>
        <taxon>Pseudomonadati</taxon>
        <taxon>Pseudomonadota</taxon>
        <taxon>Gammaproteobacteria</taxon>
        <taxon>Enterobacterales</taxon>
        <taxon>Enterobacteriaceae</taxon>
        <taxon>Enterobacter</taxon>
    </lineage>
</organism>
<protein>
    <recommendedName>
        <fullName evidence="1">Outer-membrane lipoprotein carrier protein</fullName>
    </recommendedName>
</protein>
<evidence type="ECO:0000255" key="1">
    <source>
        <dbReference type="HAMAP-Rule" id="MF_00240"/>
    </source>
</evidence>
<evidence type="ECO:0000256" key="2">
    <source>
        <dbReference type="SAM" id="MobiDB-lite"/>
    </source>
</evidence>
<keyword id="KW-0143">Chaperone</keyword>
<keyword id="KW-0574">Periplasm</keyword>
<keyword id="KW-0653">Protein transport</keyword>
<keyword id="KW-0732">Signal</keyword>
<keyword id="KW-0813">Transport</keyword>
<gene>
    <name evidence="1" type="primary">lolA</name>
    <name type="ordered locus">Ent638_1415</name>
</gene>
<feature type="signal peptide" evidence="1">
    <location>
        <begin position="1"/>
        <end position="21"/>
    </location>
</feature>
<feature type="chain" id="PRO_5000237793" description="Outer-membrane lipoprotein carrier protein">
    <location>
        <begin position="22"/>
        <end position="204"/>
    </location>
</feature>
<feature type="region of interest" description="Disordered" evidence="2">
    <location>
        <begin position="169"/>
        <end position="204"/>
    </location>
</feature>
<feature type="compositionally biased region" description="Polar residues" evidence="2">
    <location>
        <begin position="171"/>
        <end position="181"/>
    </location>
</feature>
<proteinExistence type="inferred from homology"/>
<reference key="1">
    <citation type="journal article" date="2010" name="PLoS Genet.">
        <title>Genome sequence of the plant growth promoting endophytic bacterium Enterobacter sp. 638.</title>
        <authorList>
            <person name="Taghavi S."/>
            <person name="van der Lelie D."/>
            <person name="Hoffman A."/>
            <person name="Zhang Y.B."/>
            <person name="Walla M.D."/>
            <person name="Vangronsveld J."/>
            <person name="Newman L."/>
            <person name="Monchy S."/>
        </authorList>
    </citation>
    <scope>NUCLEOTIDE SEQUENCE [LARGE SCALE GENOMIC DNA]</scope>
    <source>
        <strain>638</strain>
    </source>
</reference>
<dbReference type="EMBL" id="CP000653">
    <property type="protein sequence ID" value="ABP60095.1"/>
    <property type="molecule type" value="Genomic_DNA"/>
</dbReference>
<dbReference type="RefSeq" id="WP_012016812.1">
    <property type="nucleotide sequence ID" value="NC_009436.1"/>
</dbReference>
<dbReference type="SMR" id="A4W8R5"/>
<dbReference type="STRING" id="399742.Ent638_1415"/>
<dbReference type="KEGG" id="ent:Ent638_1415"/>
<dbReference type="eggNOG" id="COG2834">
    <property type="taxonomic scope" value="Bacteria"/>
</dbReference>
<dbReference type="HOGENOM" id="CLU_087560_1_1_6"/>
<dbReference type="OrthoDB" id="9787361at2"/>
<dbReference type="Proteomes" id="UP000000230">
    <property type="component" value="Chromosome"/>
</dbReference>
<dbReference type="GO" id="GO:0030288">
    <property type="term" value="C:outer membrane-bounded periplasmic space"/>
    <property type="evidence" value="ECO:0007669"/>
    <property type="project" value="TreeGrafter"/>
</dbReference>
<dbReference type="GO" id="GO:0044874">
    <property type="term" value="P:lipoprotein localization to outer membrane"/>
    <property type="evidence" value="ECO:0007669"/>
    <property type="project" value="UniProtKB-UniRule"/>
</dbReference>
<dbReference type="GO" id="GO:0042953">
    <property type="term" value="P:lipoprotein transport"/>
    <property type="evidence" value="ECO:0007669"/>
    <property type="project" value="InterPro"/>
</dbReference>
<dbReference type="CDD" id="cd16325">
    <property type="entry name" value="LolA"/>
    <property type="match status" value="1"/>
</dbReference>
<dbReference type="FunFam" id="2.50.20.10:FF:000001">
    <property type="entry name" value="Outer-membrane lipoprotein carrier protein"/>
    <property type="match status" value="1"/>
</dbReference>
<dbReference type="Gene3D" id="2.50.20.10">
    <property type="entry name" value="Lipoprotein localisation LolA/LolB/LppX"/>
    <property type="match status" value="1"/>
</dbReference>
<dbReference type="HAMAP" id="MF_00240">
    <property type="entry name" value="LolA"/>
    <property type="match status" value="1"/>
</dbReference>
<dbReference type="InterPro" id="IPR029046">
    <property type="entry name" value="LolA/LolB/LppX"/>
</dbReference>
<dbReference type="InterPro" id="IPR004564">
    <property type="entry name" value="OM_lipoprot_carrier_LolA-like"/>
</dbReference>
<dbReference type="InterPro" id="IPR018323">
    <property type="entry name" value="OM_lipoprot_carrier_LolA_Pbac"/>
</dbReference>
<dbReference type="NCBIfam" id="TIGR00547">
    <property type="entry name" value="lolA"/>
    <property type="match status" value="1"/>
</dbReference>
<dbReference type="PANTHER" id="PTHR35869">
    <property type="entry name" value="OUTER-MEMBRANE LIPOPROTEIN CARRIER PROTEIN"/>
    <property type="match status" value="1"/>
</dbReference>
<dbReference type="PANTHER" id="PTHR35869:SF1">
    <property type="entry name" value="OUTER-MEMBRANE LIPOPROTEIN CARRIER PROTEIN"/>
    <property type="match status" value="1"/>
</dbReference>
<dbReference type="Pfam" id="PF03548">
    <property type="entry name" value="LolA"/>
    <property type="match status" value="1"/>
</dbReference>
<dbReference type="SUPFAM" id="SSF89392">
    <property type="entry name" value="Prokaryotic lipoproteins and lipoprotein localization factors"/>
    <property type="match status" value="1"/>
</dbReference>
<accession>A4W8R5</accession>
<comment type="function">
    <text evidence="1">Participates in the translocation of lipoproteins from the inner membrane to the outer membrane. Only forms a complex with a lipoprotein if the residue after the N-terminal Cys is not an aspartate (The Asp acts as a targeting signal to indicate that the lipoprotein should stay in the inner membrane).</text>
</comment>
<comment type="subunit">
    <text evidence="1">Monomer.</text>
</comment>
<comment type="subcellular location">
    <subcellularLocation>
        <location evidence="1">Periplasm</location>
    </subcellularLocation>
</comment>
<comment type="similarity">
    <text evidence="1">Belongs to the LolA family.</text>
</comment>
<sequence>MKKIAIVGALLTSFVASSVWADAASDLKSRLDKVSSFHASFTQKVTDGSGNAVQEGQGDLWVKRPNLFNWHMTQPDESILVSDGKTLWFYNPFVEQATATLLKDATSNTPFMLIARNQTSDWQQYNIKQNGDDFVLTPKTSNGNLKQFTINVSNNGTINQFSAVEQDEQRSSYQLKSQQNGAIDASKFTFTPPQGVTVDDQRNK</sequence>
<name>LOLA_ENT38</name>